<feature type="chain" id="PRO_1000095900" description="Indole-3-glycerol phosphate synthase">
    <location>
        <begin position="1"/>
        <end position="255"/>
    </location>
</feature>
<comment type="catalytic activity">
    <reaction evidence="1">
        <text>1-(2-carboxyphenylamino)-1-deoxy-D-ribulose 5-phosphate + H(+) = (1S,2R)-1-C-(indol-3-yl)glycerol 3-phosphate + CO2 + H2O</text>
        <dbReference type="Rhea" id="RHEA:23476"/>
        <dbReference type="ChEBI" id="CHEBI:15377"/>
        <dbReference type="ChEBI" id="CHEBI:15378"/>
        <dbReference type="ChEBI" id="CHEBI:16526"/>
        <dbReference type="ChEBI" id="CHEBI:58613"/>
        <dbReference type="ChEBI" id="CHEBI:58866"/>
        <dbReference type="EC" id="4.1.1.48"/>
    </reaction>
</comment>
<comment type="pathway">
    <text evidence="1">Amino-acid biosynthesis; L-tryptophan biosynthesis; L-tryptophan from chorismate: step 4/5.</text>
</comment>
<comment type="similarity">
    <text evidence="1">Belongs to the TrpC family.</text>
</comment>
<protein>
    <recommendedName>
        <fullName evidence="1">Indole-3-glycerol phosphate synthase</fullName>
        <shortName evidence="1">IGPS</shortName>
        <ecNumber evidence="1">4.1.1.48</ecNumber>
    </recommendedName>
</protein>
<gene>
    <name evidence="1" type="primary">trpC</name>
    <name type="ordered locus">str1590</name>
</gene>
<accession>Q5LYI5</accession>
<reference key="1">
    <citation type="journal article" date="2004" name="Nat. Biotechnol.">
        <title>Complete sequence and comparative genome analysis of the dairy bacterium Streptococcus thermophilus.</title>
        <authorList>
            <person name="Bolotin A."/>
            <person name="Quinquis B."/>
            <person name="Renault P."/>
            <person name="Sorokin A."/>
            <person name="Ehrlich S.D."/>
            <person name="Kulakauskas S."/>
            <person name="Lapidus A."/>
            <person name="Goltsman E."/>
            <person name="Mazur M."/>
            <person name="Pusch G.D."/>
            <person name="Fonstein M."/>
            <person name="Overbeek R."/>
            <person name="Kyprides N."/>
            <person name="Purnelle B."/>
            <person name="Prozzi D."/>
            <person name="Ngui K."/>
            <person name="Masuy D."/>
            <person name="Hancy F."/>
            <person name="Burteau S."/>
            <person name="Boutry M."/>
            <person name="Delcour J."/>
            <person name="Goffeau A."/>
            <person name="Hols P."/>
        </authorList>
    </citation>
    <scope>NUCLEOTIDE SEQUENCE [LARGE SCALE GENOMIC DNA]</scope>
    <source>
        <strain>CNRZ 1066</strain>
    </source>
</reference>
<sequence length="255" mass="28277">MSKAFLPTILEQKEKEVAQLVMEDLQPLRQTYRLYDFLKSNQNKLQIISEVKKASPSMGDINLDVDIVAQAKTYEENGAAMISVLTDEVFFKGDISYLKEISTQVAIPTLAKDFIIDEKQIVRSRNAGATVILLIVAALPEARLKELYDFATSLGLEVLVETHNLPELEVAHRIGAEIIGVNNRNLMTFETDINTSLELSTHFKDKPVYISESAIFTGQDAALVAPYFNGILVGTALMTADNVAKKVKELQIDKG</sequence>
<dbReference type="EC" id="4.1.1.48" evidence="1"/>
<dbReference type="EMBL" id="CP000024">
    <property type="protein sequence ID" value="AAV63120.1"/>
    <property type="molecule type" value="Genomic_DNA"/>
</dbReference>
<dbReference type="RefSeq" id="WP_011227478.1">
    <property type="nucleotide sequence ID" value="NC_006449.1"/>
</dbReference>
<dbReference type="SMR" id="Q5LYI5"/>
<dbReference type="KEGG" id="stc:str1590"/>
<dbReference type="HOGENOM" id="CLU_034247_2_1_9"/>
<dbReference type="UniPathway" id="UPA00035">
    <property type="reaction ID" value="UER00043"/>
</dbReference>
<dbReference type="GO" id="GO:0004425">
    <property type="term" value="F:indole-3-glycerol-phosphate synthase activity"/>
    <property type="evidence" value="ECO:0007669"/>
    <property type="project" value="UniProtKB-UniRule"/>
</dbReference>
<dbReference type="GO" id="GO:0004640">
    <property type="term" value="F:phosphoribosylanthranilate isomerase activity"/>
    <property type="evidence" value="ECO:0007669"/>
    <property type="project" value="TreeGrafter"/>
</dbReference>
<dbReference type="GO" id="GO:0000162">
    <property type="term" value="P:L-tryptophan biosynthetic process"/>
    <property type="evidence" value="ECO:0007669"/>
    <property type="project" value="UniProtKB-UniRule"/>
</dbReference>
<dbReference type="CDD" id="cd00331">
    <property type="entry name" value="IGPS"/>
    <property type="match status" value="1"/>
</dbReference>
<dbReference type="FunFam" id="3.20.20.70:FF:000024">
    <property type="entry name" value="Indole-3-glycerol phosphate synthase"/>
    <property type="match status" value="1"/>
</dbReference>
<dbReference type="Gene3D" id="3.20.20.70">
    <property type="entry name" value="Aldolase class I"/>
    <property type="match status" value="1"/>
</dbReference>
<dbReference type="HAMAP" id="MF_00134_B">
    <property type="entry name" value="IGPS_B"/>
    <property type="match status" value="1"/>
</dbReference>
<dbReference type="InterPro" id="IPR013785">
    <property type="entry name" value="Aldolase_TIM"/>
</dbReference>
<dbReference type="InterPro" id="IPR045186">
    <property type="entry name" value="Indole-3-glycerol_P_synth"/>
</dbReference>
<dbReference type="InterPro" id="IPR013798">
    <property type="entry name" value="Indole-3-glycerol_P_synth_dom"/>
</dbReference>
<dbReference type="InterPro" id="IPR001468">
    <property type="entry name" value="Indole-3-GlycerolPSynthase_CS"/>
</dbReference>
<dbReference type="InterPro" id="IPR011060">
    <property type="entry name" value="RibuloseP-bd_barrel"/>
</dbReference>
<dbReference type="NCBIfam" id="NF001371">
    <property type="entry name" value="PRK00278.1-3"/>
    <property type="match status" value="1"/>
</dbReference>
<dbReference type="NCBIfam" id="NF001377">
    <property type="entry name" value="PRK00278.2-4"/>
    <property type="match status" value="1"/>
</dbReference>
<dbReference type="PANTHER" id="PTHR22854:SF2">
    <property type="entry name" value="INDOLE-3-GLYCEROL-PHOSPHATE SYNTHASE"/>
    <property type="match status" value="1"/>
</dbReference>
<dbReference type="PANTHER" id="PTHR22854">
    <property type="entry name" value="TRYPTOPHAN BIOSYNTHESIS PROTEIN"/>
    <property type="match status" value="1"/>
</dbReference>
<dbReference type="Pfam" id="PF00218">
    <property type="entry name" value="IGPS"/>
    <property type="match status" value="1"/>
</dbReference>
<dbReference type="SUPFAM" id="SSF51366">
    <property type="entry name" value="Ribulose-phoshate binding barrel"/>
    <property type="match status" value="1"/>
</dbReference>
<dbReference type="PROSITE" id="PS00614">
    <property type="entry name" value="IGPS"/>
    <property type="match status" value="1"/>
</dbReference>
<organism>
    <name type="scientific">Streptococcus thermophilus (strain CNRZ 1066)</name>
    <dbReference type="NCBI Taxonomy" id="299768"/>
    <lineage>
        <taxon>Bacteria</taxon>
        <taxon>Bacillati</taxon>
        <taxon>Bacillota</taxon>
        <taxon>Bacilli</taxon>
        <taxon>Lactobacillales</taxon>
        <taxon>Streptococcaceae</taxon>
        <taxon>Streptococcus</taxon>
    </lineage>
</organism>
<proteinExistence type="inferred from homology"/>
<evidence type="ECO:0000255" key="1">
    <source>
        <dbReference type="HAMAP-Rule" id="MF_00134"/>
    </source>
</evidence>
<name>TRPC_STRT1</name>
<keyword id="KW-0028">Amino-acid biosynthesis</keyword>
<keyword id="KW-0057">Aromatic amino acid biosynthesis</keyword>
<keyword id="KW-0210">Decarboxylase</keyword>
<keyword id="KW-0456">Lyase</keyword>
<keyword id="KW-0822">Tryptophan biosynthesis</keyword>